<reference key="1">
    <citation type="journal article" date="2005" name="Proc. Natl. Acad. Sci. U.S.A.">
        <title>Complete genome sequencing of Anaplasma marginale reveals that the surface is skewed to two superfamilies of outer membrane proteins.</title>
        <authorList>
            <person name="Brayton K.A."/>
            <person name="Kappmeyer L.S."/>
            <person name="Herndon D.R."/>
            <person name="Dark M.J."/>
            <person name="Tibbals D.L."/>
            <person name="Palmer G.H."/>
            <person name="McGuire T.C."/>
            <person name="Knowles D.P. Jr."/>
        </authorList>
    </citation>
    <scope>NUCLEOTIDE SEQUENCE [LARGE SCALE GENOMIC DNA]</scope>
    <source>
        <strain>St. Maries</strain>
    </source>
</reference>
<feature type="chain" id="PRO_0000264160" description="Transcriptional repressor NrdR">
    <location>
        <begin position="1"/>
        <end position="151"/>
    </location>
</feature>
<feature type="domain" description="ATP-cone" evidence="1">
    <location>
        <begin position="49"/>
        <end position="139"/>
    </location>
</feature>
<feature type="zinc finger region" evidence="1">
    <location>
        <begin position="3"/>
        <end position="34"/>
    </location>
</feature>
<gene>
    <name evidence="1" type="primary">nrdR</name>
    <name type="ordered locus">AM073</name>
</gene>
<proteinExistence type="inferred from homology"/>
<dbReference type="EMBL" id="CP000030">
    <property type="protein sequence ID" value="AAV86238.1"/>
    <property type="molecule type" value="Genomic_DNA"/>
</dbReference>
<dbReference type="RefSeq" id="WP_010266919.1">
    <property type="nucleotide sequence ID" value="NZ_AFMU01000039.1"/>
</dbReference>
<dbReference type="SMR" id="Q5PBU1"/>
<dbReference type="GeneID" id="7398227"/>
<dbReference type="KEGG" id="ama:AM073"/>
<dbReference type="PATRIC" id="fig|320483.3.peg.62"/>
<dbReference type="HOGENOM" id="CLU_108412_0_1_5"/>
<dbReference type="GO" id="GO:0005524">
    <property type="term" value="F:ATP binding"/>
    <property type="evidence" value="ECO:0007669"/>
    <property type="project" value="UniProtKB-KW"/>
</dbReference>
<dbReference type="GO" id="GO:0003677">
    <property type="term" value="F:DNA binding"/>
    <property type="evidence" value="ECO:0007669"/>
    <property type="project" value="UniProtKB-KW"/>
</dbReference>
<dbReference type="GO" id="GO:0008270">
    <property type="term" value="F:zinc ion binding"/>
    <property type="evidence" value="ECO:0007669"/>
    <property type="project" value="UniProtKB-UniRule"/>
</dbReference>
<dbReference type="GO" id="GO:0045892">
    <property type="term" value="P:negative regulation of DNA-templated transcription"/>
    <property type="evidence" value="ECO:0007669"/>
    <property type="project" value="UniProtKB-UniRule"/>
</dbReference>
<dbReference type="HAMAP" id="MF_00440">
    <property type="entry name" value="NrdR"/>
    <property type="match status" value="1"/>
</dbReference>
<dbReference type="InterPro" id="IPR005144">
    <property type="entry name" value="ATP-cone_dom"/>
</dbReference>
<dbReference type="InterPro" id="IPR055173">
    <property type="entry name" value="NrdR-like_N"/>
</dbReference>
<dbReference type="InterPro" id="IPR003796">
    <property type="entry name" value="RNR_NrdR-like"/>
</dbReference>
<dbReference type="NCBIfam" id="TIGR00244">
    <property type="entry name" value="transcriptional regulator NrdR"/>
    <property type="match status" value="1"/>
</dbReference>
<dbReference type="PANTHER" id="PTHR30455">
    <property type="entry name" value="TRANSCRIPTIONAL REPRESSOR NRDR"/>
    <property type="match status" value="1"/>
</dbReference>
<dbReference type="PANTHER" id="PTHR30455:SF2">
    <property type="entry name" value="TRANSCRIPTIONAL REPRESSOR NRDR"/>
    <property type="match status" value="1"/>
</dbReference>
<dbReference type="Pfam" id="PF03477">
    <property type="entry name" value="ATP-cone"/>
    <property type="match status" value="1"/>
</dbReference>
<dbReference type="Pfam" id="PF22811">
    <property type="entry name" value="Zn_ribbon_NrdR"/>
    <property type="match status" value="1"/>
</dbReference>
<dbReference type="PROSITE" id="PS51161">
    <property type="entry name" value="ATP_CONE"/>
    <property type="match status" value="1"/>
</dbReference>
<organism>
    <name type="scientific">Anaplasma marginale (strain St. Maries)</name>
    <dbReference type="NCBI Taxonomy" id="234826"/>
    <lineage>
        <taxon>Bacteria</taxon>
        <taxon>Pseudomonadati</taxon>
        <taxon>Pseudomonadota</taxon>
        <taxon>Alphaproteobacteria</taxon>
        <taxon>Rickettsiales</taxon>
        <taxon>Anaplasmataceae</taxon>
        <taxon>Anaplasma</taxon>
    </lineage>
</organism>
<accession>Q5PBU1</accession>
<name>NRDR_ANAMM</name>
<protein>
    <recommendedName>
        <fullName evidence="1">Transcriptional repressor NrdR</fullName>
    </recommendedName>
</protein>
<evidence type="ECO:0000255" key="1">
    <source>
        <dbReference type="HAMAP-Rule" id="MF_00440"/>
    </source>
</evidence>
<sequence>MRCPFCNSVDTSVKNSRPSDCKMSVRRRRSCDSCNSRFTTVEELLLKPVKVLKKDGSVEAFDRQKLLTSIILATKKRPVTRDQIDMVVSNMFYKLEAIKGSVVPSGVIGGMVMESLFALDKVSYIRFASVYMNFSDVNDFSGIVERVQEVV</sequence>
<comment type="function">
    <text evidence="1">Negatively regulates transcription of bacterial ribonucleotide reductase nrd genes and operons by binding to NrdR-boxes.</text>
</comment>
<comment type="cofactor">
    <cofactor evidence="1">
        <name>Zn(2+)</name>
        <dbReference type="ChEBI" id="CHEBI:29105"/>
    </cofactor>
    <text evidence="1">Binds 1 zinc ion.</text>
</comment>
<comment type="similarity">
    <text evidence="1">Belongs to the NrdR family.</text>
</comment>
<keyword id="KW-0067">ATP-binding</keyword>
<keyword id="KW-0238">DNA-binding</keyword>
<keyword id="KW-0479">Metal-binding</keyword>
<keyword id="KW-0547">Nucleotide-binding</keyword>
<keyword id="KW-0678">Repressor</keyword>
<keyword id="KW-0804">Transcription</keyword>
<keyword id="KW-0805">Transcription regulation</keyword>
<keyword id="KW-0862">Zinc</keyword>
<keyword id="KW-0863">Zinc-finger</keyword>